<comment type="function">
    <text evidence="4 6">The type IV secretion system VirB/VirD4 is a major virulence determinant for subversion of human endothelial cell (HEC) function. VirB-dependent changes of HEC include massive cytoskeletal rearrangements, a pro-inflammatory activation by nuclear factor NF-kappa-B, inhibition of early and late events of apoptosis, leading to an increased cell survival, and, at high infection doses, a cytostatic or cytotoxic effect, which interferes with a potent VirB-independent mitogenic activity. These changes of HEC require the T4S coupling protein VirD4 and at least one of the effector proteins BepA-G.</text>
</comment>
<comment type="subunit">
    <text evidence="5">Interacts with virB8, virB10, virB11 and the 15 kDa protein that is encoded within the VirB locus.</text>
</comment>
<comment type="subcellular location">
    <subcellularLocation>
        <location evidence="7">Periplasm</location>
    </subcellularLocation>
</comment>
<comment type="induction">
    <text evidence="3">During the interaction with the intracellular environment of host cells.</text>
</comment>
<comment type="similarity">
    <text evidence="7">Belongs to the TrbG/VirB9 family.</text>
</comment>
<comment type="sequence caution" evidence="7">
    <conflict type="erroneous initiation">
        <sequence resource="EMBL-CDS" id="CAF28106"/>
    </conflict>
</comment>
<sequence>MMRILKTLFLAFIAAISCYTTPSFAETAPVSARKDNRIRFVNYDPYNVTKIIGSIRSSVQLEFADDEEVTYVGIGNSVAWQVAPAGHFVFLKPREVQPVTNLQIVTSRQDGTKRSYQFELQVREGDVSAGNDTYFLVKFRYPEDEALRKKLAEAAKAAQREENFVNDIFNTHEDFGPRNWAYEAQGSPLIEPASVYDNGKTTTFTFLGNTEIPAIYLVSLDGQEALVPKTIKGNKVIVHATAAQFTLRRGNDVLCIFNKRFVPAGVNPETGTTSPSVQRKVNIGNGYE</sequence>
<gene>
    <name type="primary">virB9</name>
    <name type="ordered locus">BH13330</name>
</gene>
<protein>
    <recommendedName>
        <fullName>Type IV secretion system protein virB9</fullName>
    </recommendedName>
</protein>
<accession>Q6G2B3</accession>
<accession>Q9RNC9</accession>
<organism>
    <name type="scientific">Bartonella henselae (strain ATCC 49882 / DSM 28221 / CCUG 30454 / Houston 1)</name>
    <name type="common">Rochalimaea henselae</name>
    <dbReference type="NCBI Taxonomy" id="283166"/>
    <lineage>
        <taxon>Bacteria</taxon>
        <taxon>Pseudomonadati</taxon>
        <taxon>Pseudomonadota</taxon>
        <taxon>Alphaproteobacteria</taxon>
        <taxon>Hyphomicrobiales</taxon>
        <taxon>Bartonellaceae</taxon>
        <taxon>Bartonella</taxon>
    </lineage>
</organism>
<evidence type="ECO:0000255" key="1">
    <source>
        <dbReference type="PROSITE-ProRule" id="PRU00303"/>
    </source>
</evidence>
<evidence type="ECO:0000256" key="2">
    <source>
        <dbReference type="SAM" id="MobiDB-lite"/>
    </source>
</evidence>
<evidence type="ECO:0000269" key="3">
    <source>
    </source>
</evidence>
<evidence type="ECO:0000269" key="4">
    <source>
    </source>
</evidence>
<evidence type="ECO:0000269" key="5">
    <source>
    </source>
</evidence>
<evidence type="ECO:0000269" key="6">
    <source>
    </source>
</evidence>
<evidence type="ECO:0000305" key="7"/>
<feature type="signal peptide" evidence="1">
    <location>
        <begin position="1"/>
        <end position="25"/>
    </location>
</feature>
<feature type="chain" id="PRO_0000273534" description="Type IV secretion system protein virB9">
    <location>
        <begin position="26"/>
        <end position="288"/>
    </location>
</feature>
<feature type="region of interest" description="Disordered" evidence="2">
    <location>
        <begin position="267"/>
        <end position="288"/>
    </location>
</feature>
<feature type="compositionally biased region" description="Polar residues" evidence="2">
    <location>
        <begin position="269"/>
        <end position="279"/>
    </location>
</feature>
<proteinExistence type="evidence at protein level"/>
<dbReference type="EMBL" id="AF182718">
    <property type="protein sequence ID" value="AAF00947.1"/>
    <property type="molecule type" value="Genomic_DNA"/>
</dbReference>
<dbReference type="EMBL" id="BX897699">
    <property type="protein sequence ID" value="CAF28106.1"/>
    <property type="status" value="ALT_INIT"/>
    <property type="molecule type" value="Genomic_DNA"/>
</dbReference>
<dbReference type="RefSeq" id="WP_034448090.1">
    <property type="nucleotide sequence ID" value="NZ_LRIJ02000001.1"/>
</dbReference>
<dbReference type="SMR" id="Q6G2B3"/>
<dbReference type="PaxDb" id="283166-BH13330"/>
<dbReference type="EnsemblBacteria" id="CAF28106">
    <property type="protein sequence ID" value="CAF28106"/>
    <property type="gene ID" value="BH13330"/>
</dbReference>
<dbReference type="GeneID" id="92985944"/>
<dbReference type="KEGG" id="bhe:BH13330"/>
<dbReference type="eggNOG" id="COG3504">
    <property type="taxonomic scope" value="Bacteria"/>
</dbReference>
<dbReference type="OrthoDB" id="7390264at2"/>
<dbReference type="Proteomes" id="UP000000421">
    <property type="component" value="Chromosome"/>
</dbReference>
<dbReference type="GO" id="GO:0042597">
    <property type="term" value="C:periplasmic space"/>
    <property type="evidence" value="ECO:0007669"/>
    <property type="project" value="UniProtKB-SubCell"/>
</dbReference>
<dbReference type="CDD" id="cd06911">
    <property type="entry name" value="VirB9_CagX_TrbG"/>
    <property type="match status" value="1"/>
</dbReference>
<dbReference type="Gene3D" id="2.60.40.2500">
    <property type="match status" value="1"/>
</dbReference>
<dbReference type="InterPro" id="IPR010258">
    <property type="entry name" value="Conjugal_tfr_TrbG/VirB9/CagX"/>
</dbReference>
<dbReference type="InterPro" id="IPR014148">
    <property type="entry name" value="VirB9"/>
</dbReference>
<dbReference type="InterPro" id="IPR033645">
    <property type="entry name" value="VirB9/CagX/TrbG_C"/>
</dbReference>
<dbReference type="InterPro" id="IPR038161">
    <property type="entry name" value="VirB9/CagX/TrbG_C_sf"/>
</dbReference>
<dbReference type="NCBIfam" id="TIGR02781">
    <property type="entry name" value="VirB9"/>
    <property type="match status" value="1"/>
</dbReference>
<dbReference type="Pfam" id="PF03524">
    <property type="entry name" value="CagX"/>
    <property type="match status" value="1"/>
</dbReference>
<dbReference type="PROSITE" id="PS51257">
    <property type="entry name" value="PROKAR_LIPOPROTEIN"/>
    <property type="match status" value="1"/>
</dbReference>
<name>VIRB9_BARHE</name>
<reference key="1">
    <citation type="journal article" date="2000" name="DNA Cell Biol.">
        <title>The gene encoding the 17-kDa antigen of Bartonella henselae is located within a cluster of genes homologous to the virB virulence operon.</title>
        <authorList>
            <person name="Padmalayam I."/>
            <person name="Karem K."/>
            <person name="Baumstark B.R."/>
            <person name="Massung R."/>
        </authorList>
    </citation>
    <scope>NUCLEOTIDE SEQUENCE [GENOMIC DNA]</scope>
    <source>
        <strain>ATCC 49882 / DSM 28221 / CCUG 30454 / Houston 1</strain>
    </source>
</reference>
<reference key="2">
    <citation type="journal article" date="2004" name="Proc. Natl. Acad. Sci. U.S.A.">
        <title>The louse-borne human pathogen Bartonella quintana is a genomic derivative of the zoonotic agent Bartonella henselae.</title>
        <authorList>
            <person name="Alsmark U.C.M."/>
            <person name="Frank A.C."/>
            <person name="Karlberg E.O."/>
            <person name="Legault B.-A."/>
            <person name="Ardell D.H."/>
            <person name="Canbaeck B."/>
            <person name="Eriksson A.-S."/>
            <person name="Naeslund A.K."/>
            <person name="Handley S.A."/>
            <person name="Huvet M."/>
            <person name="La Scola B."/>
            <person name="Holmberg M."/>
            <person name="Andersson S.G.E."/>
        </authorList>
    </citation>
    <scope>NUCLEOTIDE SEQUENCE [LARGE SCALE GENOMIC DNA]</scope>
    <source>
        <strain>ATCC 49882 / DSM 28221 / CCUG 30454 / Houston 1</strain>
    </source>
</reference>
<reference key="3">
    <citation type="journal article" date="2001" name="Infect. Immun.">
        <title>Intracellular induction of the Bartonella henselae virB operon by human endothelial cells.</title>
        <authorList>
            <person name="Schmiederer M."/>
            <person name="Arcenas R."/>
            <person name="Widen R."/>
            <person name="Valkov N."/>
            <person name="Anderson B.E."/>
        </authorList>
    </citation>
    <scope>INDUCTION</scope>
    <source>
        <strain>ATCC 49882 / DSM 28221 / CCUG 30454 / Houston 1</strain>
    </source>
</reference>
<reference key="4">
    <citation type="journal article" date="2004" name="J. Bacteriol.">
        <title>Interaction between protein subunits of the type IV secretion system of Bartonella henselae.</title>
        <authorList>
            <person name="Shamaei-Tousi A."/>
            <person name="Cahill R."/>
            <person name="Frankel G."/>
        </authorList>
    </citation>
    <scope>INTERACTION WITH 15 KDA PROTEIN; VIRB8; VIRB10 AND VIRB11</scope>
</reference>
<reference key="5">
    <citation type="journal article" date="2004" name="Mol. Microbiol.">
        <title>The VirB type IV secretion system of Bartonella henselae mediates invasion, proinflammatory activation and antiapoptotic protection of endothelial cells.</title>
        <authorList>
            <person name="Schmid M.C."/>
            <person name="Schulein R."/>
            <person name="Dehio M."/>
            <person name="Denecker G."/>
            <person name="Carena I."/>
            <person name="Dehio C."/>
        </authorList>
    </citation>
    <scope>FUNCTION</scope>
    <source>
        <strain>ATCC 49882 / DSM 28221 / CCUG 30454 / Houston 1</strain>
    </source>
</reference>
<reference key="6">
    <citation type="journal article" date="2005" name="Proc. Natl. Acad. Sci. U.S.A.">
        <title>A bipartite signal mediates the transfer of type IV secretion substrates of Bartonella henselae into human cells.</title>
        <authorList>
            <person name="Schulein R."/>
            <person name="Guye P."/>
            <person name="Rhomberg T.A."/>
            <person name="Schmid M.C."/>
            <person name="Schroeder G."/>
            <person name="Vergunst A.C."/>
            <person name="Carena I."/>
            <person name="Dehio C."/>
        </authorList>
    </citation>
    <scope>FUNCTION</scope>
    <source>
        <strain>ATCC 49882 / DSM 28221 / CCUG 30454 / Houston 1</strain>
    </source>
</reference>
<keyword id="KW-0574">Periplasm</keyword>
<keyword id="KW-0732">Signal</keyword>
<keyword id="KW-0813">Transport</keyword>
<keyword id="KW-0843">Virulence</keyword>